<dbReference type="EMBL" id="CP000720">
    <property type="protein sequence ID" value="ABS47033.1"/>
    <property type="molecule type" value="Genomic_DNA"/>
</dbReference>
<dbReference type="RefSeq" id="WP_002212127.1">
    <property type="nucleotide sequence ID" value="NC_009708.1"/>
</dbReference>
<dbReference type="SMR" id="A7FFG5"/>
<dbReference type="KEGG" id="ypi:YpsIP31758_1009"/>
<dbReference type="HOGENOM" id="CLU_136774_0_0_6"/>
<dbReference type="Proteomes" id="UP000002412">
    <property type="component" value="Chromosome"/>
</dbReference>
<dbReference type="HAMAP" id="MF_01519">
    <property type="entry name" value="UPF0325"/>
    <property type="match status" value="1"/>
</dbReference>
<dbReference type="InterPro" id="IPR020911">
    <property type="entry name" value="UPF0325"/>
</dbReference>
<dbReference type="NCBIfam" id="NF010213">
    <property type="entry name" value="PRK13677.1"/>
    <property type="match status" value="1"/>
</dbReference>
<dbReference type="Pfam" id="PF11944">
    <property type="entry name" value="DUF3461"/>
    <property type="match status" value="1"/>
</dbReference>
<reference key="1">
    <citation type="journal article" date="2007" name="PLoS Genet.">
        <title>The complete genome sequence of Yersinia pseudotuberculosis IP31758, the causative agent of Far East scarlet-like fever.</title>
        <authorList>
            <person name="Eppinger M."/>
            <person name="Rosovitz M.J."/>
            <person name="Fricke W.F."/>
            <person name="Rasko D.A."/>
            <person name="Kokorina G."/>
            <person name="Fayolle C."/>
            <person name="Lindler L.E."/>
            <person name="Carniel E."/>
            <person name="Ravel J."/>
        </authorList>
    </citation>
    <scope>NUCLEOTIDE SEQUENCE [LARGE SCALE GENOMIC DNA]</scope>
    <source>
        <strain>IP 31758</strain>
    </source>
</reference>
<evidence type="ECO:0000255" key="1">
    <source>
        <dbReference type="HAMAP-Rule" id="MF_01519"/>
    </source>
</evidence>
<protein>
    <recommendedName>
        <fullName evidence="1">UPF0325 protein YpsIP31758_1009</fullName>
    </recommendedName>
</protein>
<proteinExistence type="inferred from homology"/>
<organism>
    <name type="scientific">Yersinia pseudotuberculosis serotype O:1b (strain IP 31758)</name>
    <dbReference type="NCBI Taxonomy" id="349747"/>
    <lineage>
        <taxon>Bacteria</taxon>
        <taxon>Pseudomonadati</taxon>
        <taxon>Pseudomonadota</taxon>
        <taxon>Gammaproteobacteria</taxon>
        <taxon>Enterobacterales</taxon>
        <taxon>Yersiniaceae</taxon>
        <taxon>Yersinia</taxon>
    </lineage>
</organism>
<accession>A7FFG5</accession>
<comment type="similarity">
    <text evidence="1">Belongs to the UPF0325 family.</text>
</comment>
<feature type="chain" id="PRO_1000068622" description="UPF0325 protein YpsIP31758_1009">
    <location>
        <begin position="1"/>
        <end position="129"/>
    </location>
</feature>
<gene>
    <name type="ordered locus">YpsIP31758_1009</name>
</gene>
<sequence>MYDNLKSLGITQPEDVDRYSLRQEANNDILKIYFRKDKGEFFAKSVKFKYPRQRKTVVSDNASHGYKEINEINPNLRYVIDELDQLCKRDQIEVDLKRKILDDLRHLESVVTNKIAEIEADLEKLTNGR</sequence>
<name>Y1009_YERP3</name>